<evidence type="ECO:0000255" key="1">
    <source>
        <dbReference type="HAMAP-Rule" id="MF_00385"/>
    </source>
</evidence>
<evidence type="ECO:0000305" key="2"/>
<gene>
    <name evidence="1" type="primary">rpsP</name>
    <name type="ordered locus">KPN78578_28770</name>
    <name type="ORF">KPN_02932</name>
</gene>
<reference key="1">
    <citation type="submission" date="2006-09" db="EMBL/GenBank/DDBJ databases">
        <authorList>
            <consortium name="The Klebsiella pneumonia Genome Sequencing Project"/>
            <person name="McClelland M."/>
            <person name="Sanderson E.K."/>
            <person name="Spieth J."/>
            <person name="Clifton W.S."/>
            <person name="Latreille P."/>
            <person name="Sabo A."/>
            <person name="Pepin K."/>
            <person name="Bhonagiri V."/>
            <person name="Porwollik S."/>
            <person name="Ali J."/>
            <person name="Wilson R.K."/>
        </authorList>
    </citation>
    <scope>NUCLEOTIDE SEQUENCE [LARGE SCALE GENOMIC DNA]</scope>
    <source>
        <strain>ATCC 700721 / MGH 78578</strain>
    </source>
</reference>
<dbReference type="EMBL" id="CP000647">
    <property type="protein sequence ID" value="ABR78338.1"/>
    <property type="molecule type" value="Genomic_DNA"/>
</dbReference>
<dbReference type="RefSeq" id="WP_002914149.1">
    <property type="nucleotide sequence ID" value="NC_009648.1"/>
</dbReference>
<dbReference type="SMR" id="A6TCL7"/>
<dbReference type="STRING" id="272620.KPN_02932"/>
<dbReference type="jPOST" id="A6TCL7"/>
<dbReference type="PaxDb" id="272620-KPN_02932"/>
<dbReference type="EnsemblBacteria" id="ABR78338">
    <property type="protein sequence ID" value="ABR78338"/>
    <property type="gene ID" value="KPN_02932"/>
</dbReference>
<dbReference type="GeneID" id="93250230"/>
<dbReference type="KEGG" id="kpn:KPN_02932"/>
<dbReference type="HOGENOM" id="CLU_100590_5_1_6"/>
<dbReference type="Proteomes" id="UP000000265">
    <property type="component" value="Chromosome"/>
</dbReference>
<dbReference type="GO" id="GO:0005737">
    <property type="term" value="C:cytoplasm"/>
    <property type="evidence" value="ECO:0007669"/>
    <property type="project" value="UniProtKB-ARBA"/>
</dbReference>
<dbReference type="GO" id="GO:0015935">
    <property type="term" value="C:small ribosomal subunit"/>
    <property type="evidence" value="ECO:0007669"/>
    <property type="project" value="TreeGrafter"/>
</dbReference>
<dbReference type="GO" id="GO:0003735">
    <property type="term" value="F:structural constituent of ribosome"/>
    <property type="evidence" value="ECO:0007669"/>
    <property type="project" value="InterPro"/>
</dbReference>
<dbReference type="GO" id="GO:0006412">
    <property type="term" value="P:translation"/>
    <property type="evidence" value="ECO:0007669"/>
    <property type="project" value="UniProtKB-UniRule"/>
</dbReference>
<dbReference type="FunFam" id="3.30.1320.10:FF:000001">
    <property type="entry name" value="30S ribosomal protein S16"/>
    <property type="match status" value="1"/>
</dbReference>
<dbReference type="Gene3D" id="3.30.1320.10">
    <property type="match status" value="1"/>
</dbReference>
<dbReference type="HAMAP" id="MF_00385">
    <property type="entry name" value="Ribosomal_bS16"/>
    <property type="match status" value="1"/>
</dbReference>
<dbReference type="InterPro" id="IPR000307">
    <property type="entry name" value="Ribosomal_bS16"/>
</dbReference>
<dbReference type="InterPro" id="IPR020592">
    <property type="entry name" value="Ribosomal_bS16_CS"/>
</dbReference>
<dbReference type="InterPro" id="IPR023803">
    <property type="entry name" value="Ribosomal_bS16_dom_sf"/>
</dbReference>
<dbReference type="NCBIfam" id="TIGR00002">
    <property type="entry name" value="S16"/>
    <property type="match status" value="1"/>
</dbReference>
<dbReference type="PANTHER" id="PTHR12919">
    <property type="entry name" value="30S RIBOSOMAL PROTEIN S16"/>
    <property type="match status" value="1"/>
</dbReference>
<dbReference type="PANTHER" id="PTHR12919:SF20">
    <property type="entry name" value="SMALL RIBOSOMAL SUBUNIT PROTEIN BS16M"/>
    <property type="match status" value="1"/>
</dbReference>
<dbReference type="Pfam" id="PF00886">
    <property type="entry name" value="Ribosomal_S16"/>
    <property type="match status" value="1"/>
</dbReference>
<dbReference type="SUPFAM" id="SSF54565">
    <property type="entry name" value="Ribosomal protein S16"/>
    <property type="match status" value="1"/>
</dbReference>
<dbReference type="PROSITE" id="PS00732">
    <property type="entry name" value="RIBOSOMAL_S16"/>
    <property type="match status" value="1"/>
</dbReference>
<name>RS16_KLEP7</name>
<feature type="chain" id="PRO_1000049271" description="Small ribosomal subunit protein bS16">
    <location>
        <begin position="1"/>
        <end position="82"/>
    </location>
</feature>
<organism>
    <name type="scientific">Klebsiella pneumoniae subsp. pneumoniae (strain ATCC 700721 / MGH 78578)</name>
    <dbReference type="NCBI Taxonomy" id="272620"/>
    <lineage>
        <taxon>Bacteria</taxon>
        <taxon>Pseudomonadati</taxon>
        <taxon>Pseudomonadota</taxon>
        <taxon>Gammaproteobacteria</taxon>
        <taxon>Enterobacterales</taxon>
        <taxon>Enterobacteriaceae</taxon>
        <taxon>Klebsiella/Raoultella group</taxon>
        <taxon>Klebsiella</taxon>
        <taxon>Klebsiella pneumoniae complex</taxon>
    </lineage>
</organism>
<comment type="similarity">
    <text evidence="1">Belongs to the bacterial ribosomal protein bS16 family.</text>
</comment>
<proteinExistence type="inferred from homology"/>
<sequence length="82" mass="9090">MVTIRLARHGAKKRPFYQVVVTDSRNARNGRFIERVGFFNPIANGAEEETRLDLDRIAHWVGQGATVSDRVAALIKAANKAA</sequence>
<accession>A6TCL7</accession>
<keyword id="KW-0687">Ribonucleoprotein</keyword>
<keyword id="KW-0689">Ribosomal protein</keyword>
<protein>
    <recommendedName>
        <fullName evidence="1">Small ribosomal subunit protein bS16</fullName>
    </recommendedName>
    <alternativeName>
        <fullName evidence="2">30S ribosomal protein S16</fullName>
    </alternativeName>
</protein>